<accession>Q3BYC8</accession>
<name>YEGS_XANE5</name>
<protein>
    <recommendedName>
        <fullName evidence="1">Probable lipid kinase YegS-like</fullName>
        <ecNumber evidence="1">2.7.1.-</ecNumber>
    </recommendedName>
</protein>
<sequence>MAPSHWRVILNGKSTDNMDLREAVGTLRKRGIQLDVRVTWEDGDAERYVGEAVADGVHTVVAAGGDGTLSEVAAALAHHEGDAASLPSLGLVPLGTANDFATAANLPIAPLEALTLIAERVAQPVDLLRIDADHGPHWCANVASGGFGTQVTVETDEGLKKMLGGLAYLITGMSRLGRIDPISARFSGPEFSWEGEFIALGLGNGRQAGGGQALCPEALIDDGLLDVTIVPDLDGEVAATLGTLVIGGKQAALERVAVRARVPWLEIVSQQPLTLNLDGEPETSRHFRIECVPARLRMHLPGECPLLGG</sequence>
<keyword id="KW-0067">ATP-binding</keyword>
<keyword id="KW-0963">Cytoplasm</keyword>
<keyword id="KW-0418">Kinase</keyword>
<keyword id="KW-0444">Lipid biosynthesis</keyword>
<keyword id="KW-0443">Lipid metabolism</keyword>
<keyword id="KW-0460">Magnesium</keyword>
<keyword id="KW-0479">Metal-binding</keyword>
<keyword id="KW-0547">Nucleotide-binding</keyword>
<keyword id="KW-0594">Phospholipid biosynthesis</keyword>
<keyword id="KW-1208">Phospholipid metabolism</keyword>
<keyword id="KW-0808">Transferase</keyword>
<organism>
    <name type="scientific">Xanthomonas euvesicatoria pv. vesicatoria (strain 85-10)</name>
    <name type="common">Xanthomonas campestris pv. vesicatoria</name>
    <dbReference type="NCBI Taxonomy" id="316273"/>
    <lineage>
        <taxon>Bacteria</taxon>
        <taxon>Pseudomonadati</taxon>
        <taxon>Pseudomonadota</taxon>
        <taxon>Gammaproteobacteria</taxon>
        <taxon>Lysobacterales</taxon>
        <taxon>Lysobacteraceae</taxon>
        <taxon>Xanthomonas</taxon>
    </lineage>
</organism>
<proteinExistence type="inferred from homology"/>
<comment type="function">
    <text evidence="1">Probably phosphorylates lipids; the in vivo substrate is unknown.</text>
</comment>
<comment type="cofactor">
    <cofactor evidence="1">
        <name>Mg(2+)</name>
        <dbReference type="ChEBI" id="CHEBI:18420"/>
    </cofactor>
    <cofactor evidence="1">
        <name>Ca(2+)</name>
        <dbReference type="ChEBI" id="CHEBI:29108"/>
    </cofactor>
    <text evidence="1">Binds 1 Mg(2+) ion per subunit. Ca(2+) may be able to substitute.</text>
</comment>
<comment type="subcellular location">
    <subcellularLocation>
        <location evidence="1">Cytoplasm</location>
    </subcellularLocation>
</comment>
<comment type="similarity">
    <text evidence="1">Belongs to the diacylglycerol/lipid kinase family. YegS lipid kinase subfamily.</text>
</comment>
<gene>
    <name type="ordered locus">XCV0504</name>
</gene>
<feature type="chain" id="PRO_0000292167" description="Probable lipid kinase YegS-like">
    <location>
        <begin position="1"/>
        <end position="309"/>
    </location>
</feature>
<feature type="domain" description="DAGKc" evidence="1">
    <location>
        <begin position="1"/>
        <end position="134"/>
    </location>
</feature>
<feature type="active site" description="Proton acceptor" evidence="1">
    <location>
        <position position="280"/>
    </location>
</feature>
<feature type="binding site" evidence="1">
    <location>
        <position position="39"/>
    </location>
    <ligand>
        <name>ATP</name>
        <dbReference type="ChEBI" id="CHEBI:30616"/>
    </ligand>
</feature>
<feature type="binding site" evidence="1">
    <location>
        <begin position="65"/>
        <end position="71"/>
    </location>
    <ligand>
        <name>ATP</name>
        <dbReference type="ChEBI" id="CHEBI:30616"/>
    </ligand>
</feature>
<feature type="binding site" evidence="1">
    <location>
        <position position="96"/>
    </location>
    <ligand>
        <name>ATP</name>
        <dbReference type="ChEBI" id="CHEBI:30616"/>
    </ligand>
</feature>
<feature type="binding site" evidence="1">
    <location>
        <position position="219"/>
    </location>
    <ligand>
        <name>Mg(2+)</name>
        <dbReference type="ChEBI" id="CHEBI:18420"/>
    </ligand>
</feature>
<feature type="binding site" evidence="1">
    <location>
        <position position="222"/>
    </location>
    <ligand>
        <name>Mg(2+)</name>
        <dbReference type="ChEBI" id="CHEBI:18420"/>
    </ligand>
</feature>
<feature type="binding site" evidence="1">
    <location>
        <position position="224"/>
    </location>
    <ligand>
        <name>Mg(2+)</name>
        <dbReference type="ChEBI" id="CHEBI:18420"/>
    </ligand>
</feature>
<reference key="1">
    <citation type="journal article" date="2005" name="J. Bacteriol.">
        <title>Insights into genome plasticity and pathogenicity of the plant pathogenic Bacterium Xanthomonas campestris pv. vesicatoria revealed by the complete genome sequence.</title>
        <authorList>
            <person name="Thieme F."/>
            <person name="Koebnik R."/>
            <person name="Bekel T."/>
            <person name="Berger C."/>
            <person name="Boch J."/>
            <person name="Buettner D."/>
            <person name="Caldana C."/>
            <person name="Gaigalat L."/>
            <person name="Goesmann A."/>
            <person name="Kay S."/>
            <person name="Kirchner O."/>
            <person name="Lanz C."/>
            <person name="Linke B."/>
            <person name="McHardy A.C."/>
            <person name="Meyer F."/>
            <person name="Mittenhuber G."/>
            <person name="Nies D.H."/>
            <person name="Niesbach-Kloesgen U."/>
            <person name="Patschkowski T."/>
            <person name="Rueckert C."/>
            <person name="Rupp O."/>
            <person name="Schneiker S."/>
            <person name="Schuster S.C."/>
            <person name="Vorhoelter F.J."/>
            <person name="Weber E."/>
            <person name="Puehler A."/>
            <person name="Bonas U."/>
            <person name="Bartels D."/>
            <person name="Kaiser O."/>
        </authorList>
    </citation>
    <scope>NUCLEOTIDE SEQUENCE [LARGE SCALE GENOMIC DNA]</scope>
    <source>
        <strain>85-10</strain>
    </source>
</reference>
<evidence type="ECO:0000255" key="1">
    <source>
        <dbReference type="HAMAP-Rule" id="MF_01377"/>
    </source>
</evidence>
<dbReference type="EC" id="2.7.1.-" evidence="1"/>
<dbReference type="EMBL" id="AM039952">
    <property type="protein sequence ID" value="CAJ22135.1"/>
    <property type="molecule type" value="Genomic_DNA"/>
</dbReference>
<dbReference type="SMR" id="Q3BYC8"/>
<dbReference type="STRING" id="456327.BJD11_20350"/>
<dbReference type="KEGG" id="xcv:XCV0504"/>
<dbReference type="eggNOG" id="COG1597">
    <property type="taxonomic scope" value="Bacteria"/>
</dbReference>
<dbReference type="HOGENOM" id="CLU_045532_1_1_6"/>
<dbReference type="Proteomes" id="UP000007069">
    <property type="component" value="Chromosome"/>
</dbReference>
<dbReference type="GO" id="GO:0005737">
    <property type="term" value="C:cytoplasm"/>
    <property type="evidence" value="ECO:0007669"/>
    <property type="project" value="UniProtKB-SubCell"/>
</dbReference>
<dbReference type="GO" id="GO:0005886">
    <property type="term" value="C:plasma membrane"/>
    <property type="evidence" value="ECO:0007669"/>
    <property type="project" value="TreeGrafter"/>
</dbReference>
<dbReference type="GO" id="GO:0005524">
    <property type="term" value="F:ATP binding"/>
    <property type="evidence" value="ECO:0007669"/>
    <property type="project" value="UniProtKB-UniRule"/>
</dbReference>
<dbReference type="GO" id="GO:0001727">
    <property type="term" value="F:lipid kinase activity"/>
    <property type="evidence" value="ECO:0007669"/>
    <property type="project" value="UniProtKB-UniRule"/>
</dbReference>
<dbReference type="GO" id="GO:0000287">
    <property type="term" value="F:magnesium ion binding"/>
    <property type="evidence" value="ECO:0007669"/>
    <property type="project" value="UniProtKB-UniRule"/>
</dbReference>
<dbReference type="GO" id="GO:0008654">
    <property type="term" value="P:phospholipid biosynthetic process"/>
    <property type="evidence" value="ECO:0007669"/>
    <property type="project" value="UniProtKB-UniRule"/>
</dbReference>
<dbReference type="Gene3D" id="2.60.200.40">
    <property type="match status" value="1"/>
</dbReference>
<dbReference type="Gene3D" id="3.40.50.10330">
    <property type="entry name" value="Probable inorganic polyphosphate/atp-NAD kinase, domain 1"/>
    <property type="match status" value="1"/>
</dbReference>
<dbReference type="HAMAP" id="MF_01377">
    <property type="entry name" value="YegS"/>
    <property type="match status" value="1"/>
</dbReference>
<dbReference type="InterPro" id="IPR017438">
    <property type="entry name" value="ATP-NAD_kinase_N"/>
</dbReference>
<dbReference type="InterPro" id="IPR005218">
    <property type="entry name" value="Diacylglycerol/lipid_kinase"/>
</dbReference>
<dbReference type="InterPro" id="IPR001206">
    <property type="entry name" value="Diacylglycerol_kinase_cat_dom"/>
</dbReference>
<dbReference type="InterPro" id="IPR022433">
    <property type="entry name" value="Lip_kinase_YegS"/>
</dbReference>
<dbReference type="InterPro" id="IPR050187">
    <property type="entry name" value="Lipid_Phosphate_FormReg"/>
</dbReference>
<dbReference type="InterPro" id="IPR016064">
    <property type="entry name" value="NAD/diacylglycerol_kinase_sf"/>
</dbReference>
<dbReference type="InterPro" id="IPR045540">
    <property type="entry name" value="YegS/DAGK_C"/>
</dbReference>
<dbReference type="NCBIfam" id="TIGR03702">
    <property type="entry name" value="lip_kinase_YegS"/>
    <property type="match status" value="1"/>
</dbReference>
<dbReference type="NCBIfam" id="NF009602">
    <property type="entry name" value="PRK13054.1"/>
    <property type="match status" value="1"/>
</dbReference>
<dbReference type="NCBIfam" id="TIGR00147">
    <property type="entry name" value="YegS/Rv2252/BmrU family lipid kinase"/>
    <property type="match status" value="1"/>
</dbReference>
<dbReference type="PANTHER" id="PTHR12358:SF106">
    <property type="entry name" value="LIPID KINASE YEGS"/>
    <property type="match status" value="1"/>
</dbReference>
<dbReference type="PANTHER" id="PTHR12358">
    <property type="entry name" value="SPHINGOSINE KINASE"/>
    <property type="match status" value="1"/>
</dbReference>
<dbReference type="Pfam" id="PF00781">
    <property type="entry name" value="DAGK_cat"/>
    <property type="match status" value="1"/>
</dbReference>
<dbReference type="Pfam" id="PF19279">
    <property type="entry name" value="YegS_C"/>
    <property type="match status" value="1"/>
</dbReference>
<dbReference type="SMART" id="SM00046">
    <property type="entry name" value="DAGKc"/>
    <property type="match status" value="1"/>
</dbReference>
<dbReference type="SUPFAM" id="SSF111331">
    <property type="entry name" value="NAD kinase/diacylglycerol kinase-like"/>
    <property type="match status" value="1"/>
</dbReference>
<dbReference type="PROSITE" id="PS50146">
    <property type="entry name" value="DAGK"/>
    <property type="match status" value="1"/>
</dbReference>